<organism>
    <name type="scientific">Mus musculus</name>
    <name type="common">Mouse</name>
    <dbReference type="NCBI Taxonomy" id="10090"/>
    <lineage>
        <taxon>Eukaryota</taxon>
        <taxon>Metazoa</taxon>
        <taxon>Chordata</taxon>
        <taxon>Craniata</taxon>
        <taxon>Vertebrata</taxon>
        <taxon>Euteleostomi</taxon>
        <taxon>Mammalia</taxon>
        <taxon>Eutheria</taxon>
        <taxon>Euarchontoglires</taxon>
        <taxon>Glires</taxon>
        <taxon>Rodentia</taxon>
        <taxon>Myomorpha</taxon>
        <taxon>Muroidea</taxon>
        <taxon>Muridae</taxon>
        <taxon>Murinae</taxon>
        <taxon>Mus</taxon>
        <taxon>Mus</taxon>
    </lineage>
</organism>
<name>GALP_MOUSE</name>
<proteinExistence type="evidence at transcript level"/>
<accession>Q810H5</accession>
<accession>A5GXX4</accession>
<keyword id="KW-0025">Alternative splicing</keyword>
<keyword id="KW-0044">Antibiotic</keyword>
<keyword id="KW-0929">Antimicrobial</keyword>
<keyword id="KW-0165">Cleavage on pair of basic residues</keyword>
<keyword id="KW-0372">Hormone</keyword>
<keyword id="KW-0527">Neuropeptide</keyword>
<keyword id="KW-1185">Reference proteome</keyword>
<keyword id="KW-0964">Secreted</keyword>
<keyword id="KW-0732">Signal</keyword>
<reference key="1">
    <citation type="journal article" date="2003" name="Endocrinology">
        <title>Changes in hypothalamic expression levels of galanin-like peptide in rat and mouse models support that it is a leptin-target peptide.</title>
        <authorList>
            <person name="Kumano S."/>
            <person name="Matsumoto H."/>
            <person name="Takatsu Y."/>
            <person name="Noguchi J."/>
            <person name="Kitada C."/>
            <person name="Ohtaki T."/>
        </authorList>
    </citation>
    <scope>NUCLEOTIDE SEQUENCE [MRNA] (ISOFORM 1)</scope>
    <scope>FUNCTION</scope>
    <source>
        <strain>BALB/cJ</strain>
    </source>
</reference>
<reference key="2">
    <citation type="journal article" date="2007" name="Proc. Natl. Acad. Sci. U.S.A.">
        <title>Alarin is a vasoactive peptide.</title>
        <authorList>
            <person name="Santic R."/>
            <person name="Schmidhuber S.M."/>
            <person name="Lang R."/>
            <person name="Rauch I."/>
            <person name="Voglas E."/>
            <person name="Eberhard N."/>
            <person name="Bauer J.W."/>
            <person name="Brain S.D."/>
            <person name="Kofler B."/>
        </authorList>
    </citation>
    <scope>NUCLEOTIDE SEQUENCE [MRNA] (ISOFORM 2)</scope>
    <scope>FUNCTION</scope>
    <scope>TISSUE SPECIFICITY (ISOFORM 2)</scope>
</reference>
<sequence>MACSVHLVLFLTILLSLAETPESAPAHRGRGGWTLNSAGYLLGPVLPVSSKADQGRKRDSALEILDLWKIIDGLPYSHSPRMTKRTMGETFVKANTGDMHILDKNVPKEEATLDSES</sequence>
<feature type="signal peptide" evidence="1">
    <location>
        <begin position="1"/>
        <end position="23"/>
    </location>
</feature>
<feature type="chain" id="PRO_0000316085" description="Galanin-like peptide">
    <location>
        <begin position="24"/>
        <end position="83"/>
    </location>
</feature>
<feature type="propeptide" id="PRO_0000316086" evidence="1">
    <location>
        <begin position="86"/>
        <end position="117"/>
    </location>
</feature>
<feature type="splice variant" id="VSP_030462" description="In isoform 2." evidence="4">
    <original>GRGGWTLNSAGYLLGPVLPVSSKADQGRKRDSALEILDLWKIIDGLPYSHSPRMTKRTMGETFVKANTGDMHILDKNVPKEEATLDSES</original>
    <variation>SSPFPPRPTRAGRETQLLR</variation>
    <location>
        <begin position="29"/>
        <end position="117"/>
    </location>
</feature>
<comment type="function">
    <molecule>Isoform 1</molecule>
    <text>Hypothalamic neuropeptide which binds to the G-protein-coupled galanin receptors (GALR1, GALR2 and GALR3). Involved in a large number of putative physiological functions in CNS homeostatic processes, including the regulation of gonadotropin-releasing hormone secretion.</text>
</comment>
<comment type="function">
    <molecule>Isoform 2</molecule>
    <text evidence="1 2 3">Exhibits antimicrobial activity against Gram-negative bacterias, inducing bacterial membrane blebbing (By similarity). Exhibits potent and dose-dependent vasoconstrictor and anti-edema activity in the cutaneous microvasculature, a physiologic effects which does not appear to be mediated via GALR1 or GALR2.</text>
</comment>
<comment type="subcellular location">
    <subcellularLocation>
        <location evidence="1">Secreted</location>
    </subcellularLocation>
</comment>
<comment type="alternative products">
    <event type="alternative splicing"/>
    <isoform>
        <id>Q810H5-1</id>
        <name>1</name>
        <sequence type="displayed"/>
    </isoform>
    <isoform>
        <id>Q810H5-2</id>
        <name>2</name>
        <name>Alarin</name>
        <sequence type="described" ref="VSP_030462"/>
    </isoform>
</comment>
<comment type="tissue specificity">
    <text>Isoform 2 is found in brain, thymus and skin. Isoform 2 is found in the skin, in pericytes covering microvascular arterioles and venules on their abluminal surfaces. In larger vessels, isoform 2 is expressed in layers of smooth muscle cells. Isoform 2 is not detected in endothelial cells.</text>
</comment>
<comment type="miscellaneous">
    <molecule>Isoform 2</molecule>
    <text evidence="5">Cleavage of the signal peptide generates a peptide of 25 amino acids, termed alarin because of the N-terminal alanine and the C-terminal serine. Vasoactive peptide.</text>
</comment>
<comment type="similarity">
    <text evidence="5">Belongs to the galanin family.</text>
</comment>
<evidence type="ECO:0000250" key="1"/>
<evidence type="ECO:0000269" key="2">
    <source>
    </source>
</evidence>
<evidence type="ECO:0000269" key="3">
    <source>
    </source>
</evidence>
<evidence type="ECO:0000303" key="4">
    <source>
    </source>
</evidence>
<evidence type="ECO:0000305" key="5"/>
<protein>
    <recommendedName>
        <fullName>Galanin-like peptide</fullName>
    </recommendedName>
</protein>
<gene>
    <name type="primary">Galp</name>
</gene>
<dbReference type="EMBL" id="AY163546">
    <property type="protein sequence ID" value="AAO22485.1"/>
    <property type="molecule type" value="mRNA"/>
</dbReference>
<dbReference type="EMBL" id="DQ155644">
    <property type="protein sequence ID" value="ABA39411.1"/>
    <property type="molecule type" value="mRNA"/>
</dbReference>
<dbReference type="CCDS" id="CCDS20771.1">
    <molecule id="Q810H5-1"/>
</dbReference>
<dbReference type="RefSeq" id="NP_821171.1">
    <molecule id="Q810H5-1"/>
    <property type="nucleotide sequence ID" value="NM_178028.2"/>
</dbReference>
<dbReference type="RefSeq" id="XP_006539852.1">
    <property type="nucleotide sequence ID" value="XM_006539789.1"/>
</dbReference>
<dbReference type="FunCoup" id="Q810H5">
    <property type="interactions" value="371"/>
</dbReference>
<dbReference type="STRING" id="10090.ENSMUSP00000037408"/>
<dbReference type="GlyGen" id="Q810H5">
    <property type="glycosylation" value="1 site"/>
</dbReference>
<dbReference type="PhosphoSitePlus" id="Q810H5"/>
<dbReference type="PaxDb" id="10090-ENSMUSP00000037408"/>
<dbReference type="Antibodypedia" id="33185">
    <property type="antibodies" value="105 antibodies from 22 providers"/>
</dbReference>
<dbReference type="DNASU" id="232836"/>
<dbReference type="Ensembl" id="ENSMUST00000037553.6">
    <molecule id="Q810H5-1"/>
    <property type="protein sequence ID" value="ENSMUSP00000037408.6"/>
    <property type="gene ID" value="ENSMUSG00000034660.9"/>
</dbReference>
<dbReference type="GeneID" id="232836"/>
<dbReference type="KEGG" id="mmu:232836"/>
<dbReference type="UCSC" id="uc009fax.1">
    <molecule id="Q810H5-1"/>
    <property type="organism name" value="mouse"/>
</dbReference>
<dbReference type="AGR" id="MGI:2663979"/>
<dbReference type="CTD" id="85569"/>
<dbReference type="MGI" id="MGI:2663979">
    <property type="gene designation" value="Galp"/>
</dbReference>
<dbReference type="VEuPathDB" id="HostDB:ENSMUSG00000034660"/>
<dbReference type="eggNOG" id="ENOG502TI9H">
    <property type="taxonomic scope" value="Eukaryota"/>
</dbReference>
<dbReference type="GeneTree" id="ENSGT00390000016349"/>
<dbReference type="HOGENOM" id="CLU_167264_0_0_1"/>
<dbReference type="InParanoid" id="Q810H5"/>
<dbReference type="OMA" id="PQMSDQD"/>
<dbReference type="OrthoDB" id="8721537at2759"/>
<dbReference type="PhylomeDB" id="Q810H5"/>
<dbReference type="TreeFam" id="TF339481"/>
<dbReference type="BioGRID-ORCS" id="232836">
    <property type="hits" value="1 hit in 76 CRISPR screens"/>
</dbReference>
<dbReference type="ChiTaRS" id="Galp">
    <property type="organism name" value="mouse"/>
</dbReference>
<dbReference type="PRO" id="PR:Q810H5"/>
<dbReference type="Proteomes" id="UP000000589">
    <property type="component" value="Chromosome 7"/>
</dbReference>
<dbReference type="RNAct" id="Q810H5">
    <property type="molecule type" value="protein"/>
</dbReference>
<dbReference type="Bgee" id="ENSMUSG00000034660">
    <property type="expression patterns" value="Expressed in testis and 3 other cell types or tissues"/>
</dbReference>
<dbReference type="ExpressionAtlas" id="Q810H5">
    <property type="expression patterns" value="baseline and differential"/>
</dbReference>
<dbReference type="GO" id="GO:0005576">
    <property type="term" value="C:extracellular region"/>
    <property type="evidence" value="ECO:0007669"/>
    <property type="project" value="UniProtKB-SubCell"/>
</dbReference>
<dbReference type="GO" id="GO:0005179">
    <property type="term" value="F:hormone activity"/>
    <property type="evidence" value="ECO:0007669"/>
    <property type="project" value="UniProtKB-KW"/>
</dbReference>
<dbReference type="GO" id="GO:0005102">
    <property type="term" value="F:signaling receptor binding"/>
    <property type="evidence" value="ECO:0000304"/>
    <property type="project" value="MGI"/>
</dbReference>
<dbReference type="GO" id="GO:0042595">
    <property type="term" value="P:behavioral response to starvation"/>
    <property type="evidence" value="ECO:0000315"/>
    <property type="project" value="MGI"/>
</dbReference>
<dbReference type="GO" id="GO:0042742">
    <property type="term" value="P:defense response to bacterium"/>
    <property type="evidence" value="ECO:0007669"/>
    <property type="project" value="UniProtKB-KW"/>
</dbReference>
<dbReference type="GO" id="GO:0007218">
    <property type="term" value="P:neuropeptide signaling pathway"/>
    <property type="evidence" value="ECO:0007669"/>
    <property type="project" value="UniProtKB-KW"/>
</dbReference>
<dbReference type="GO" id="GO:0032098">
    <property type="term" value="P:regulation of appetite"/>
    <property type="evidence" value="ECO:0000315"/>
    <property type="project" value="MGI"/>
</dbReference>
<dbReference type="GO" id="GO:0032868">
    <property type="term" value="P:response to insulin"/>
    <property type="evidence" value="ECO:0007669"/>
    <property type="project" value="Ensembl"/>
</dbReference>
<dbReference type="InterPro" id="IPR008174">
    <property type="entry name" value="Galanin"/>
</dbReference>
<dbReference type="InterPro" id="IPR039244">
    <property type="entry name" value="GALP"/>
</dbReference>
<dbReference type="PANTHER" id="PTHR20950:SF1">
    <property type="entry name" value="GALANIN-LIKE PEPTIDE"/>
    <property type="match status" value="1"/>
</dbReference>
<dbReference type="PANTHER" id="PTHR20950">
    <property type="entry name" value="GALANIN-RELATED PEPTIDE"/>
    <property type="match status" value="1"/>
</dbReference>
<dbReference type="Pfam" id="PF01296">
    <property type="entry name" value="Galanin"/>
    <property type="match status" value="1"/>
</dbReference>
<dbReference type="PROSITE" id="PS00861">
    <property type="entry name" value="GALANIN"/>
    <property type="match status" value="1"/>
</dbReference>